<organism>
    <name type="scientific">Archaeoglobus fulgidus (strain ATCC 49558 / DSM 4304 / JCM 9628 / NBRC 100126 / VC-16)</name>
    <dbReference type="NCBI Taxonomy" id="224325"/>
    <lineage>
        <taxon>Archaea</taxon>
        <taxon>Methanobacteriati</taxon>
        <taxon>Methanobacteriota</taxon>
        <taxon>Archaeoglobi</taxon>
        <taxon>Archaeoglobales</taxon>
        <taxon>Archaeoglobaceae</taxon>
        <taxon>Archaeoglobus</taxon>
    </lineage>
</organism>
<dbReference type="EMBL" id="AE000782">
    <property type="protein sequence ID" value="AAB90531.1"/>
    <property type="molecule type" value="Genomic_DNA"/>
</dbReference>
<dbReference type="PIR" id="F69339">
    <property type="entry name" value="F69339"/>
</dbReference>
<dbReference type="RefSeq" id="WP_010878221.1">
    <property type="nucleotide sequence ID" value="NC_000917.1"/>
</dbReference>
<dbReference type="SMR" id="O29540"/>
<dbReference type="STRING" id="224325.AF_0718"/>
<dbReference type="PaxDb" id="224325-AF_0718"/>
<dbReference type="EnsemblBacteria" id="AAB90531">
    <property type="protein sequence ID" value="AAB90531"/>
    <property type="gene ID" value="AF_0718"/>
</dbReference>
<dbReference type="GeneID" id="43496658"/>
<dbReference type="KEGG" id="afu:AF_0718"/>
<dbReference type="eggNOG" id="arCOG00503">
    <property type="taxonomic scope" value="Archaea"/>
</dbReference>
<dbReference type="HOGENOM" id="CLU_3178374_0_0_2"/>
<dbReference type="Proteomes" id="UP000002199">
    <property type="component" value="Chromosome"/>
</dbReference>
<accession>O29540</accession>
<protein>
    <recommendedName>
        <fullName>Uncharacterized protein AF_0718</fullName>
    </recommendedName>
</protein>
<keyword id="KW-1185">Reference proteome</keyword>
<reference key="1">
    <citation type="journal article" date="1997" name="Nature">
        <title>The complete genome sequence of the hyperthermophilic, sulphate-reducing archaeon Archaeoglobus fulgidus.</title>
        <authorList>
            <person name="Klenk H.-P."/>
            <person name="Clayton R.A."/>
            <person name="Tomb J.-F."/>
            <person name="White O."/>
            <person name="Nelson K.E."/>
            <person name="Ketchum K.A."/>
            <person name="Dodson R.J."/>
            <person name="Gwinn M.L."/>
            <person name="Hickey E.K."/>
            <person name="Peterson J.D."/>
            <person name="Richardson D.L."/>
            <person name="Kerlavage A.R."/>
            <person name="Graham D.E."/>
            <person name="Kyrpides N.C."/>
            <person name="Fleischmann R.D."/>
            <person name="Quackenbush J."/>
            <person name="Lee N.H."/>
            <person name="Sutton G.G."/>
            <person name="Gill S.R."/>
            <person name="Kirkness E.F."/>
            <person name="Dougherty B.A."/>
            <person name="McKenney K."/>
            <person name="Adams M.D."/>
            <person name="Loftus B.J."/>
            <person name="Peterson S.N."/>
            <person name="Reich C.I."/>
            <person name="McNeil L.K."/>
            <person name="Badger J.H."/>
            <person name="Glodek A."/>
            <person name="Zhou L."/>
            <person name="Overbeek R."/>
            <person name="Gocayne J.D."/>
            <person name="Weidman J.F."/>
            <person name="McDonald L.A."/>
            <person name="Utterback T.R."/>
            <person name="Cotton M.D."/>
            <person name="Spriggs T."/>
            <person name="Artiach P."/>
            <person name="Kaine B.P."/>
            <person name="Sykes S.M."/>
            <person name="Sadow P.W."/>
            <person name="D'Andrea K.P."/>
            <person name="Bowman C."/>
            <person name="Fujii C."/>
            <person name="Garland S.A."/>
            <person name="Mason T.M."/>
            <person name="Olsen G.J."/>
            <person name="Fraser C.M."/>
            <person name="Smith H.O."/>
            <person name="Woese C.R."/>
            <person name="Venter J.C."/>
        </authorList>
    </citation>
    <scope>NUCLEOTIDE SEQUENCE [LARGE SCALE GENOMIC DNA]</scope>
    <source>
        <strain>ATCC 49558 / DSM 4304 / JCM 9628 / NBRC 100126 / VC-16</strain>
    </source>
</reference>
<gene>
    <name type="ordered locus">AF_0718</name>
</gene>
<name>Y718_ARCFU</name>
<proteinExistence type="predicted"/>
<sequence>MVKVYVLVDNKVVDLRPPGMKAEWGFSAYIDAKEPVLMDSGIRYRL</sequence>
<feature type="chain" id="PRO_0000127913" description="Uncharacterized protein AF_0718">
    <location>
        <begin position="1"/>
        <end position="46"/>
    </location>
</feature>